<proteinExistence type="evidence at protein level"/>
<dbReference type="EMBL" id="BN001308">
    <property type="protein sequence ID" value="CBF88485.1"/>
    <property type="molecule type" value="Genomic_DNA"/>
</dbReference>
<dbReference type="RefSeq" id="XP_658544.1">
    <property type="nucleotide sequence ID" value="XM_653452.1"/>
</dbReference>
<dbReference type="EnsemblFungi" id="CBF88485">
    <property type="protein sequence ID" value="CBF88485"/>
    <property type="gene ID" value="ANIA_00940"/>
</dbReference>
<dbReference type="GeneID" id="2876719"/>
<dbReference type="KEGG" id="ani:ANIA_00940"/>
<dbReference type="VEuPathDB" id="FungiDB:AN0940"/>
<dbReference type="eggNOG" id="ENOG502RPSS">
    <property type="taxonomic scope" value="Eukaryota"/>
</dbReference>
<dbReference type="HOGENOM" id="CLU_176407_0_0_1"/>
<dbReference type="InParanoid" id="Q5BEU0"/>
<dbReference type="OMA" id="ACCYTIG"/>
<dbReference type="OrthoDB" id="4269539at2759"/>
<dbReference type="Proteomes" id="UP000000560">
    <property type="component" value="Chromosome VIII"/>
</dbReference>
<organism>
    <name type="scientific">Emericella nidulans (strain FGSC A4 / ATCC 38163 / CBS 112.46 / NRRL 194 / M139)</name>
    <name type="common">Aspergillus nidulans</name>
    <dbReference type="NCBI Taxonomy" id="227321"/>
    <lineage>
        <taxon>Eukaryota</taxon>
        <taxon>Fungi</taxon>
        <taxon>Dikarya</taxon>
        <taxon>Ascomycota</taxon>
        <taxon>Pezizomycotina</taxon>
        <taxon>Eurotiomycetes</taxon>
        <taxon>Eurotiomycetidae</taxon>
        <taxon>Eurotiales</taxon>
        <taxon>Aspergillaceae</taxon>
        <taxon>Aspergillus</taxon>
        <taxon>Aspergillus subgen. Nidulantes</taxon>
    </lineage>
</organism>
<keyword id="KW-0183">Conidiation</keyword>
<keyword id="KW-1015">Disulfide bond</keyword>
<keyword id="KW-1185">Reference proteome</keyword>
<keyword id="KW-0964">Secreted</keyword>
<keyword id="KW-0732">Signal</keyword>
<keyword id="KW-0749">Sporulation</keyword>
<accession>Q5BEU0</accession>
<accession>C8VUI2</accession>
<sequence length="101" mass="10612">MHLSTSAAAILALSLAGPTMAGRPYFCPLALDAKFLQVPYCCEGFVPARDSKVSFEGVNCIDVSSDEDFVKTCPKGGTPKCCYSIGPKVICTTEVGDGVDK</sequence>
<feature type="signal peptide" evidence="2">
    <location>
        <begin position="1"/>
        <end position="21"/>
    </location>
</feature>
<feature type="chain" id="PRO_5010219502" description="Unclassified hydrophobin dewD">
    <location>
        <begin position="22"/>
        <end position="101"/>
    </location>
</feature>
<feature type="disulfide bond" evidence="1">
    <location>
        <begin position="27"/>
        <end position="81"/>
    </location>
</feature>
<feature type="disulfide bond" evidence="1">
    <location>
        <begin position="41"/>
        <end position="73"/>
    </location>
</feature>
<feature type="disulfide bond" evidence="1">
    <location>
        <begin position="42"/>
        <end position="60"/>
    </location>
</feature>
<feature type="disulfide bond" evidence="1">
    <location>
        <begin position="82"/>
        <end position="91"/>
    </location>
</feature>
<evidence type="ECO:0000250" key="1">
    <source>
        <dbReference type="UniProtKB" id="Q04571"/>
    </source>
</evidence>
<evidence type="ECO:0000255" key="2"/>
<evidence type="ECO:0000269" key="3">
    <source>
    </source>
</evidence>
<evidence type="ECO:0000303" key="4">
    <source>
    </source>
</evidence>
<evidence type="ECO:0000305" key="5"/>
<reference key="1">
    <citation type="journal article" date="2005" name="Nature">
        <title>Sequencing of Aspergillus nidulans and comparative analysis with A. fumigatus and A. oryzae.</title>
        <authorList>
            <person name="Galagan J.E."/>
            <person name="Calvo S.E."/>
            <person name="Cuomo C."/>
            <person name="Ma L.-J."/>
            <person name="Wortman J.R."/>
            <person name="Batzoglou S."/>
            <person name="Lee S.-I."/>
            <person name="Bastuerkmen M."/>
            <person name="Spevak C.C."/>
            <person name="Clutterbuck J."/>
            <person name="Kapitonov V."/>
            <person name="Jurka J."/>
            <person name="Scazzocchio C."/>
            <person name="Farman M.L."/>
            <person name="Butler J."/>
            <person name="Purcell S."/>
            <person name="Harris S."/>
            <person name="Braus G.H."/>
            <person name="Draht O."/>
            <person name="Busch S."/>
            <person name="D'Enfert C."/>
            <person name="Bouchier C."/>
            <person name="Goldman G.H."/>
            <person name="Bell-Pedersen D."/>
            <person name="Griffiths-Jones S."/>
            <person name="Doonan J.H."/>
            <person name="Yu J."/>
            <person name="Vienken K."/>
            <person name="Pain A."/>
            <person name="Freitag M."/>
            <person name="Selker E.U."/>
            <person name="Archer D.B."/>
            <person name="Penalva M.A."/>
            <person name="Oakley B.R."/>
            <person name="Momany M."/>
            <person name="Tanaka T."/>
            <person name="Kumagai T."/>
            <person name="Asai K."/>
            <person name="Machida M."/>
            <person name="Nierman W.C."/>
            <person name="Denning D.W."/>
            <person name="Caddick M.X."/>
            <person name="Hynes M."/>
            <person name="Paoletti M."/>
            <person name="Fischer R."/>
            <person name="Miller B.L."/>
            <person name="Dyer P.S."/>
            <person name="Sachs M.S."/>
            <person name="Osmani S.A."/>
            <person name="Birren B.W."/>
        </authorList>
    </citation>
    <scope>NUCLEOTIDE SEQUENCE [LARGE SCALE GENOMIC DNA]</scope>
    <source>
        <strain>FGSC A4 / ATCC 38163 / CBS 112.46 / NRRL 194 / M139</strain>
    </source>
</reference>
<reference key="2">
    <citation type="journal article" date="2009" name="Fungal Genet. Biol.">
        <title>The 2008 update of the Aspergillus nidulans genome annotation: a community effort.</title>
        <authorList>
            <person name="Wortman J.R."/>
            <person name="Gilsenan J.M."/>
            <person name="Joardar V."/>
            <person name="Deegan J."/>
            <person name="Clutterbuck J."/>
            <person name="Andersen M.R."/>
            <person name="Archer D."/>
            <person name="Bencina M."/>
            <person name="Braus G."/>
            <person name="Coutinho P."/>
            <person name="von Dohren H."/>
            <person name="Doonan J."/>
            <person name="Driessen A.J."/>
            <person name="Durek P."/>
            <person name="Espeso E."/>
            <person name="Fekete E."/>
            <person name="Flipphi M."/>
            <person name="Estrada C.G."/>
            <person name="Geysens S."/>
            <person name="Goldman G."/>
            <person name="de Groot P.W."/>
            <person name="Hansen K."/>
            <person name="Harris S.D."/>
            <person name="Heinekamp T."/>
            <person name="Helmstaedt K."/>
            <person name="Henrissat B."/>
            <person name="Hofmann G."/>
            <person name="Homan T."/>
            <person name="Horio T."/>
            <person name="Horiuchi H."/>
            <person name="James S."/>
            <person name="Jones M."/>
            <person name="Karaffa L."/>
            <person name="Karanyi Z."/>
            <person name="Kato M."/>
            <person name="Keller N."/>
            <person name="Kelly D.E."/>
            <person name="Kiel J.A."/>
            <person name="Kim J.M."/>
            <person name="van der Klei I.J."/>
            <person name="Klis F.M."/>
            <person name="Kovalchuk A."/>
            <person name="Krasevec N."/>
            <person name="Kubicek C.P."/>
            <person name="Liu B."/>
            <person name="Maccabe A."/>
            <person name="Meyer V."/>
            <person name="Mirabito P."/>
            <person name="Miskei M."/>
            <person name="Mos M."/>
            <person name="Mullins J."/>
            <person name="Nelson D.R."/>
            <person name="Nielsen J."/>
            <person name="Oakley B.R."/>
            <person name="Osmani S.A."/>
            <person name="Pakula T."/>
            <person name="Paszewski A."/>
            <person name="Paulsen I."/>
            <person name="Pilsyk S."/>
            <person name="Pocsi I."/>
            <person name="Punt P.J."/>
            <person name="Ram A.F."/>
            <person name="Ren Q."/>
            <person name="Robellet X."/>
            <person name="Robson G."/>
            <person name="Seiboth B."/>
            <person name="van Solingen P."/>
            <person name="Specht T."/>
            <person name="Sun J."/>
            <person name="Taheri-Talesh N."/>
            <person name="Takeshita N."/>
            <person name="Ussery D."/>
            <person name="vanKuyk P.A."/>
            <person name="Visser H."/>
            <person name="van de Vondervoort P.J."/>
            <person name="de Vries R.P."/>
            <person name="Walton J."/>
            <person name="Xiang X."/>
            <person name="Xiong Y."/>
            <person name="Zeng A.P."/>
            <person name="Brandt B.W."/>
            <person name="Cornell M.J."/>
            <person name="van den Hondel C.A."/>
            <person name="Visser J."/>
            <person name="Oliver S.G."/>
            <person name="Turner G."/>
        </authorList>
    </citation>
    <scope>GENOME REANNOTATION</scope>
    <source>
        <strain>FGSC A4 / ATCC 38163 / CBS 112.46 / NRRL 194 / M139</strain>
    </source>
</reference>
<reference key="3">
    <citation type="journal article" date="2014" name="PLoS ONE">
        <title>Six hydrophobins are involved in hydrophobin rodlet formation in Aspergillus nidulans and contribute to hydrophobicity of the spore surface.</title>
        <authorList>
            <person name="Gruenbacher A."/>
            <person name="Throm T."/>
            <person name="Seidel C."/>
            <person name="Gutt B."/>
            <person name="Roehrig J."/>
            <person name="Strunk T."/>
            <person name="Vincze P."/>
            <person name="Walheim S."/>
            <person name="Schimmel T."/>
            <person name="Wenzel W."/>
            <person name="Fischer R."/>
        </authorList>
    </citation>
    <scope>FUNCTION</scope>
    <scope>SUBUNIT</scope>
    <scope>INDUCTION</scope>
    <scope>SUBCELLULAR LOCATION</scope>
</reference>
<comment type="function">
    <text evidence="3 5">Aerial growth, conidiation, and dispersal of filamentous fungi in the environment rely upon a capability of their secreting small amphipathic proteins called hydrophobins (HPBs) with low sequence identity. Class I can self-assemble into an outermost layer of rodlet bundles on aerial cell surfaces, conferring cellular hydrophobicity that supports fungal growth, development and dispersal; whereas Class II form highly ordered films at water-air interfaces through intermolecular interactions but contribute nothing to the rodlet structure (Probable). DewD is an unclassified hydrophobin that contributes to the hydrophobicity of the spore surface (PubMed:24722460).</text>
</comment>
<comment type="subunit">
    <text evidence="3">Self-assembles to form functional amyloid fibrils called rodlets. Self-assembly into fibrillar rodlets occurs spontaneously at hydrophobic:hydrophilic interfaces and the rodlets further associate laterally to form amphipathic monolayers.</text>
</comment>
<comment type="subcellular location">
    <subcellularLocation>
        <location evidence="3">Secreted</location>
    </subcellularLocation>
    <subcellularLocation>
        <location evidence="3">Spore wall</location>
    </subcellularLocation>
</comment>
<comment type="induction">
    <text evidence="3">Expressed after 12 to 24 hours post induction of asexual development, which correlates with the development of metulae and phialides (PubMed:24722460). Expressed in vegetative hyphae (PubMed:24722460).</text>
</comment>
<name>DEWD_EMENI</name>
<gene>
    <name evidence="4" type="primary">dewD</name>
    <name type="ORF">ANIA_00940</name>
</gene>
<protein>
    <recommendedName>
        <fullName evidence="4">Unclassified hydrophobin dewD</fullName>
    </recommendedName>
</protein>